<dbReference type="EC" id="3.5.4.4" evidence="1"/>
<dbReference type="EMBL" id="CP000961">
    <property type="protein sequence ID" value="ACA85414.1"/>
    <property type="molecule type" value="Genomic_DNA"/>
</dbReference>
<dbReference type="RefSeq" id="WP_012323760.1">
    <property type="nucleotide sequence ID" value="NC_010506.1"/>
</dbReference>
<dbReference type="SMR" id="B1KHA6"/>
<dbReference type="STRING" id="392500.Swoo_1121"/>
<dbReference type="KEGG" id="swd:Swoo_1121"/>
<dbReference type="eggNOG" id="COG1816">
    <property type="taxonomic scope" value="Bacteria"/>
</dbReference>
<dbReference type="HOGENOM" id="CLU_039228_0_0_6"/>
<dbReference type="Proteomes" id="UP000002168">
    <property type="component" value="Chromosome"/>
</dbReference>
<dbReference type="GO" id="GO:0005829">
    <property type="term" value="C:cytosol"/>
    <property type="evidence" value="ECO:0007669"/>
    <property type="project" value="TreeGrafter"/>
</dbReference>
<dbReference type="GO" id="GO:0046936">
    <property type="term" value="F:2'-deoxyadenosine deaminase activity"/>
    <property type="evidence" value="ECO:0007669"/>
    <property type="project" value="RHEA"/>
</dbReference>
<dbReference type="GO" id="GO:0004000">
    <property type="term" value="F:adenosine deaminase activity"/>
    <property type="evidence" value="ECO:0007669"/>
    <property type="project" value="UniProtKB-UniRule"/>
</dbReference>
<dbReference type="GO" id="GO:0008270">
    <property type="term" value="F:zinc ion binding"/>
    <property type="evidence" value="ECO:0007669"/>
    <property type="project" value="UniProtKB-UniRule"/>
</dbReference>
<dbReference type="GO" id="GO:0006154">
    <property type="term" value="P:adenosine catabolic process"/>
    <property type="evidence" value="ECO:0007669"/>
    <property type="project" value="TreeGrafter"/>
</dbReference>
<dbReference type="GO" id="GO:0043103">
    <property type="term" value="P:hypoxanthine salvage"/>
    <property type="evidence" value="ECO:0007669"/>
    <property type="project" value="TreeGrafter"/>
</dbReference>
<dbReference type="GO" id="GO:0046103">
    <property type="term" value="P:inosine biosynthetic process"/>
    <property type="evidence" value="ECO:0007669"/>
    <property type="project" value="TreeGrafter"/>
</dbReference>
<dbReference type="GO" id="GO:0009117">
    <property type="term" value="P:nucleotide metabolic process"/>
    <property type="evidence" value="ECO:0007669"/>
    <property type="project" value="UniProtKB-KW"/>
</dbReference>
<dbReference type="GO" id="GO:0009168">
    <property type="term" value="P:purine ribonucleoside monophosphate biosynthetic process"/>
    <property type="evidence" value="ECO:0007669"/>
    <property type="project" value="UniProtKB-UniRule"/>
</dbReference>
<dbReference type="CDD" id="cd01320">
    <property type="entry name" value="ADA"/>
    <property type="match status" value="1"/>
</dbReference>
<dbReference type="Gene3D" id="3.20.20.140">
    <property type="entry name" value="Metal-dependent hydrolases"/>
    <property type="match status" value="1"/>
</dbReference>
<dbReference type="HAMAP" id="MF_00540">
    <property type="entry name" value="A_deaminase"/>
    <property type="match status" value="1"/>
</dbReference>
<dbReference type="InterPro" id="IPR028893">
    <property type="entry name" value="A_deaminase"/>
</dbReference>
<dbReference type="InterPro" id="IPR001365">
    <property type="entry name" value="A_deaminase_dom"/>
</dbReference>
<dbReference type="InterPro" id="IPR006330">
    <property type="entry name" value="Ado/ade_deaminase"/>
</dbReference>
<dbReference type="InterPro" id="IPR032466">
    <property type="entry name" value="Metal_Hydrolase"/>
</dbReference>
<dbReference type="NCBIfam" id="TIGR01430">
    <property type="entry name" value="aden_deam"/>
    <property type="match status" value="1"/>
</dbReference>
<dbReference type="PANTHER" id="PTHR11409">
    <property type="entry name" value="ADENOSINE DEAMINASE"/>
    <property type="match status" value="1"/>
</dbReference>
<dbReference type="PANTHER" id="PTHR11409:SF43">
    <property type="entry name" value="ADENOSINE DEAMINASE"/>
    <property type="match status" value="1"/>
</dbReference>
<dbReference type="Pfam" id="PF00962">
    <property type="entry name" value="A_deaminase"/>
    <property type="match status" value="1"/>
</dbReference>
<dbReference type="SUPFAM" id="SSF51556">
    <property type="entry name" value="Metallo-dependent hydrolases"/>
    <property type="match status" value="1"/>
</dbReference>
<evidence type="ECO:0000255" key="1">
    <source>
        <dbReference type="HAMAP-Rule" id="MF_00540"/>
    </source>
</evidence>
<keyword id="KW-0378">Hydrolase</keyword>
<keyword id="KW-0479">Metal-binding</keyword>
<keyword id="KW-0546">Nucleotide metabolism</keyword>
<keyword id="KW-1185">Reference proteome</keyword>
<keyword id="KW-0862">Zinc</keyword>
<gene>
    <name evidence="1" type="primary">add</name>
    <name type="ordered locus">Swoo_1121</name>
</gene>
<protein>
    <recommendedName>
        <fullName evidence="1">Adenosine deaminase</fullName>
        <ecNumber evidence="1">3.5.4.4</ecNumber>
    </recommendedName>
    <alternativeName>
        <fullName evidence="1">Adenosine aminohydrolase</fullName>
    </alternativeName>
</protein>
<feature type="chain" id="PRO_1000128868" description="Adenosine deaminase">
    <location>
        <begin position="1"/>
        <end position="331"/>
    </location>
</feature>
<feature type="active site" description="Proton donor" evidence="1">
    <location>
        <position position="200"/>
    </location>
</feature>
<feature type="binding site" evidence="1">
    <location>
        <position position="12"/>
    </location>
    <ligand>
        <name>Zn(2+)</name>
        <dbReference type="ChEBI" id="CHEBI:29105"/>
        <note>catalytic</note>
    </ligand>
</feature>
<feature type="binding site" evidence="1">
    <location>
        <position position="14"/>
    </location>
    <ligand>
        <name>substrate</name>
    </ligand>
</feature>
<feature type="binding site" evidence="1">
    <location>
        <position position="14"/>
    </location>
    <ligand>
        <name>Zn(2+)</name>
        <dbReference type="ChEBI" id="CHEBI:29105"/>
        <note>catalytic</note>
    </ligand>
</feature>
<feature type="binding site" evidence="1">
    <location>
        <position position="16"/>
    </location>
    <ligand>
        <name>substrate</name>
    </ligand>
</feature>
<feature type="binding site" evidence="1">
    <location>
        <position position="170"/>
    </location>
    <ligand>
        <name>substrate</name>
    </ligand>
</feature>
<feature type="binding site" evidence="1">
    <location>
        <position position="197"/>
    </location>
    <ligand>
        <name>Zn(2+)</name>
        <dbReference type="ChEBI" id="CHEBI:29105"/>
        <note>catalytic</note>
    </ligand>
</feature>
<feature type="binding site" evidence="1">
    <location>
        <position position="278"/>
    </location>
    <ligand>
        <name>Zn(2+)</name>
        <dbReference type="ChEBI" id="CHEBI:29105"/>
        <note>catalytic</note>
    </ligand>
</feature>
<feature type="site" description="Important for catalytic activity" evidence="1">
    <location>
        <position position="221"/>
    </location>
</feature>
<sequence>MNYQALPKIDLHCHLDGSVRPQTIIDLANQQNVTIPSQDINEISSLMIAPETCQNLEEYLMRFELPLSVMQTEEGIERISFELFEDAAKENVKYFEVRFGPQLHQLQGLSFDQIISSAVKGMQRAEAMYDIKGNYILSILRTMDKGNINDVIDAGAAYLNKGVVAFDLAGAELPGFCHEFIPYVNYAIEKGYRITIHAGEQGVGQNVFDAVSLLGAERVGHGIHIKGHQGAYDLVKEKSVALETCPSSNIQTKAVDVLSNHPIKAFYQGGVLITINTDNRTVSNTTMTDEVRKVMEEFNLSREDYFAIYRVSVEQSFASDEVKQELLKLAE</sequence>
<comment type="function">
    <text evidence="1">Catalyzes the hydrolytic deamination of adenosine and 2-deoxyadenosine.</text>
</comment>
<comment type="catalytic activity">
    <reaction evidence="1">
        <text>adenosine + H2O + H(+) = inosine + NH4(+)</text>
        <dbReference type="Rhea" id="RHEA:24408"/>
        <dbReference type="ChEBI" id="CHEBI:15377"/>
        <dbReference type="ChEBI" id="CHEBI:15378"/>
        <dbReference type="ChEBI" id="CHEBI:16335"/>
        <dbReference type="ChEBI" id="CHEBI:17596"/>
        <dbReference type="ChEBI" id="CHEBI:28938"/>
        <dbReference type="EC" id="3.5.4.4"/>
    </reaction>
    <physiologicalReaction direction="left-to-right" evidence="1">
        <dbReference type="Rhea" id="RHEA:24409"/>
    </physiologicalReaction>
</comment>
<comment type="catalytic activity">
    <reaction evidence="1">
        <text>2'-deoxyadenosine + H2O + H(+) = 2'-deoxyinosine + NH4(+)</text>
        <dbReference type="Rhea" id="RHEA:28190"/>
        <dbReference type="ChEBI" id="CHEBI:15377"/>
        <dbReference type="ChEBI" id="CHEBI:15378"/>
        <dbReference type="ChEBI" id="CHEBI:17256"/>
        <dbReference type="ChEBI" id="CHEBI:28938"/>
        <dbReference type="ChEBI" id="CHEBI:28997"/>
        <dbReference type="EC" id="3.5.4.4"/>
    </reaction>
    <physiologicalReaction direction="left-to-right" evidence="1">
        <dbReference type="Rhea" id="RHEA:28191"/>
    </physiologicalReaction>
</comment>
<comment type="cofactor">
    <cofactor evidence="1">
        <name>Zn(2+)</name>
        <dbReference type="ChEBI" id="CHEBI:29105"/>
    </cofactor>
    <text evidence="1">Binds 1 zinc ion per subunit.</text>
</comment>
<comment type="similarity">
    <text evidence="1">Belongs to the metallo-dependent hydrolases superfamily. Adenosine and AMP deaminases family. Adenosine deaminase subfamily.</text>
</comment>
<name>ADD_SHEWM</name>
<reference key="1">
    <citation type="submission" date="2008-02" db="EMBL/GenBank/DDBJ databases">
        <title>Complete sequence of Shewanella woodyi ATCC 51908.</title>
        <authorList>
            <consortium name="US DOE Joint Genome Institute"/>
            <person name="Copeland A."/>
            <person name="Lucas S."/>
            <person name="Lapidus A."/>
            <person name="Glavina del Rio T."/>
            <person name="Dalin E."/>
            <person name="Tice H."/>
            <person name="Bruce D."/>
            <person name="Goodwin L."/>
            <person name="Pitluck S."/>
            <person name="Sims D."/>
            <person name="Brettin T."/>
            <person name="Detter J.C."/>
            <person name="Han C."/>
            <person name="Kuske C.R."/>
            <person name="Schmutz J."/>
            <person name="Larimer F."/>
            <person name="Land M."/>
            <person name="Hauser L."/>
            <person name="Kyrpides N."/>
            <person name="Lykidis A."/>
            <person name="Zhao J.-S."/>
            <person name="Richardson P."/>
        </authorList>
    </citation>
    <scope>NUCLEOTIDE SEQUENCE [LARGE SCALE GENOMIC DNA]</scope>
    <source>
        <strain>ATCC 51908 / MS32</strain>
    </source>
</reference>
<organism>
    <name type="scientific">Shewanella woodyi (strain ATCC 51908 / MS32)</name>
    <dbReference type="NCBI Taxonomy" id="392500"/>
    <lineage>
        <taxon>Bacteria</taxon>
        <taxon>Pseudomonadati</taxon>
        <taxon>Pseudomonadota</taxon>
        <taxon>Gammaproteobacteria</taxon>
        <taxon>Alteromonadales</taxon>
        <taxon>Shewanellaceae</taxon>
        <taxon>Shewanella</taxon>
    </lineage>
</organism>
<proteinExistence type="inferred from homology"/>
<accession>B1KHA6</accession>